<evidence type="ECO:0000250" key="1">
    <source>
        <dbReference type="UniProtKB" id="P06856"/>
    </source>
</evidence>
<evidence type="ECO:0000305" key="2"/>
<keyword id="KW-0233">DNA recombination</keyword>
<keyword id="KW-0235">DNA replication</keyword>
<keyword id="KW-0238">DNA-binding</keyword>
<keyword id="KW-0239">DNA-directed DNA polymerase</keyword>
<keyword id="KW-0244">Early protein</keyword>
<keyword id="KW-0378">Hydrolase</keyword>
<keyword id="KW-0511">Multifunctional enzyme</keyword>
<keyword id="KW-0548">Nucleotidyltransferase</keyword>
<keyword id="KW-0808">Transferase</keyword>
<keyword id="KW-1194">Viral DNA replication</keyword>
<gene>
    <name type="primary">OPG071</name>
    <name type="synonym">POL</name>
    <name type="ORF">E9L</name>
</gene>
<organism>
    <name type="scientific">Variola virus</name>
    <dbReference type="NCBI Taxonomy" id="10255"/>
    <lineage>
        <taxon>Viruses</taxon>
        <taxon>Varidnaviria</taxon>
        <taxon>Bamfordvirae</taxon>
        <taxon>Nucleocytoviricota</taxon>
        <taxon>Pokkesviricetes</taxon>
        <taxon>Chitovirales</taxon>
        <taxon>Poxviridae</taxon>
        <taxon>Chordopoxvirinae</taxon>
        <taxon>Orthopoxvirus</taxon>
    </lineage>
</organism>
<dbReference type="EC" id="2.7.7.7"/>
<dbReference type="EC" id="3.1.11.-"/>
<dbReference type="EMBL" id="L22579">
    <property type="protein sequence ID" value="AAA60798.1"/>
    <property type="molecule type" value="Genomic_DNA"/>
</dbReference>
<dbReference type="PIR" id="T28488">
    <property type="entry name" value="T28488"/>
</dbReference>
<dbReference type="SMR" id="P0DOO6"/>
<dbReference type="DrugBank" id="DB12151">
    <property type="generic name" value="Brincidofovir"/>
</dbReference>
<dbReference type="Proteomes" id="UP000119805">
    <property type="component" value="Segment"/>
</dbReference>
<dbReference type="GO" id="GO:0003677">
    <property type="term" value="F:DNA binding"/>
    <property type="evidence" value="ECO:0007669"/>
    <property type="project" value="UniProtKB-KW"/>
</dbReference>
<dbReference type="GO" id="GO:0003887">
    <property type="term" value="F:DNA-directed DNA polymerase activity"/>
    <property type="evidence" value="ECO:0007669"/>
    <property type="project" value="UniProtKB-KW"/>
</dbReference>
<dbReference type="GO" id="GO:0016787">
    <property type="term" value="F:hydrolase activity"/>
    <property type="evidence" value="ECO:0007669"/>
    <property type="project" value="UniProtKB-KW"/>
</dbReference>
<dbReference type="GO" id="GO:0000166">
    <property type="term" value="F:nucleotide binding"/>
    <property type="evidence" value="ECO:0007669"/>
    <property type="project" value="InterPro"/>
</dbReference>
<dbReference type="GO" id="GO:0006310">
    <property type="term" value="P:DNA recombination"/>
    <property type="evidence" value="ECO:0007669"/>
    <property type="project" value="UniProtKB-KW"/>
</dbReference>
<dbReference type="GO" id="GO:0006260">
    <property type="term" value="P:DNA replication"/>
    <property type="evidence" value="ECO:0007669"/>
    <property type="project" value="UniProtKB-KW"/>
</dbReference>
<dbReference type="GO" id="GO:0039693">
    <property type="term" value="P:viral DNA genome replication"/>
    <property type="evidence" value="ECO:0007669"/>
    <property type="project" value="UniProtKB-KW"/>
</dbReference>
<dbReference type="FunFam" id="1.10.287.690:FF:000010">
    <property type="entry name" value="DNA polymerase"/>
    <property type="match status" value="1"/>
</dbReference>
<dbReference type="Gene3D" id="1.10.287.690">
    <property type="entry name" value="Helix hairpin bin"/>
    <property type="match status" value="1"/>
</dbReference>
<dbReference type="Gene3D" id="3.90.1600.10">
    <property type="entry name" value="Palm domain of DNA polymerase"/>
    <property type="match status" value="2"/>
</dbReference>
<dbReference type="Gene3D" id="3.30.420.10">
    <property type="entry name" value="Ribonuclease H-like superfamily/Ribonuclease H"/>
    <property type="match status" value="1"/>
</dbReference>
<dbReference type="InterPro" id="IPR006172">
    <property type="entry name" value="DNA-dir_DNA_pol_B"/>
</dbReference>
<dbReference type="InterPro" id="IPR017964">
    <property type="entry name" value="DNA-dir_DNA_pol_B_CS"/>
</dbReference>
<dbReference type="InterPro" id="IPR006133">
    <property type="entry name" value="DNA-dir_DNA_pol_B_exonuc"/>
</dbReference>
<dbReference type="InterPro" id="IPR006134">
    <property type="entry name" value="DNA-dir_DNA_pol_B_multi_dom"/>
</dbReference>
<dbReference type="InterPro" id="IPR013617">
    <property type="entry name" value="DNA-dir_DNA_pol_B_vir_insert"/>
</dbReference>
<dbReference type="InterPro" id="IPR043502">
    <property type="entry name" value="DNA/RNA_pol_sf"/>
</dbReference>
<dbReference type="InterPro" id="IPR023211">
    <property type="entry name" value="DNA_pol_palm_dom_sf"/>
</dbReference>
<dbReference type="InterPro" id="IPR050240">
    <property type="entry name" value="DNA_pol_type-B"/>
</dbReference>
<dbReference type="InterPro" id="IPR013660">
    <property type="entry name" value="DNApol_B_exo_N"/>
</dbReference>
<dbReference type="InterPro" id="IPR012337">
    <property type="entry name" value="RNaseH-like_sf"/>
</dbReference>
<dbReference type="InterPro" id="IPR036397">
    <property type="entry name" value="RNaseH_sf"/>
</dbReference>
<dbReference type="PANTHER" id="PTHR10322">
    <property type="entry name" value="DNA POLYMERASE CATALYTIC SUBUNIT"/>
    <property type="match status" value="1"/>
</dbReference>
<dbReference type="PANTHER" id="PTHR10322:SF23">
    <property type="entry name" value="DNA POLYMERASE DELTA CATALYTIC SUBUNIT"/>
    <property type="match status" value="1"/>
</dbReference>
<dbReference type="Pfam" id="PF00136">
    <property type="entry name" value="DNA_pol_B"/>
    <property type="match status" value="1"/>
</dbReference>
<dbReference type="Pfam" id="PF08408">
    <property type="entry name" value="DNA_pol_B_3"/>
    <property type="match status" value="1"/>
</dbReference>
<dbReference type="Pfam" id="PF03104">
    <property type="entry name" value="DNA_pol_B_exo1"/>
    <property type="match status" value="1"/>
</dbReference>
<dbReference type="Pfam" id="PF08452">
    <property type="entry name" value="DNAP_B_exo_N"/>
    <property type="match status" value="1"/>
</dbReference>
<dbReference type="PRINTS" id="PR00106">
    <property type="entry name" value="DNAPOLB"/>
</dbReference>
<dbReference type="SMART" id="SM00486">
    <property type="entry name" value="POLBc"/>
    <property type="match status" value="1"/>
</dbReference>
<dbReference type="SUPFAM" id="SSF56672">
    <property type="entry name" value="DNA/RNA polymerases"/>
    <property type="match status" value="1"/>
</dbReference>
<dbReference type="SUPFAM" id="SSF53098">
    <property type="entry name" value="Ribonuclease H-like"/>
    <property type="match status" value="1"/>
</dbReference>
<dbReference type="PROSITE" id="PS00116">
    <property type="entry name" value="DNA_POLYMERASE_B"/>
    <property type="match status" value="1"/>
</dbReference>
<proteinExistence type="inferred from homology"/>
<accession>P0DOO6</accession>
<accession>P33793</accession>
<accession>Q85375</accession>
<organismHost>
    <name type="scientific">Homo sapiens</name>
    <name type="common">Human</name>
    <dbReference type="NCBI Taxonomy" id="9606"/>
</organismHost>
<reference key="1">
    <citation type="journal article" date="1993" name="Nature">
        <title>Potential virulence determinants in terminal regions of variola smallpox virus genome.</title>
        <authorList>
            <person name="Massung R.F."/>
            <person name="Esposito J.J."/>
            <person name="Liu L.I."/>
            <person name="Qi J."/>
            <person name="Utterback T.R."/>
            <person name="Knight J.C."/>
            <person name="Aubin L."/>
            <person name="Yuran T.E."/>
            <person name="Parsons J.M."/>
            <person name="Loparev V.N."/>
            <person name="Selivanov N.A."/>
            <person name="Cavallaro K.F."/>
            <person name="Kerlavage A.R."/>
            <person name="Mahy B.W.J."/>
            <person name="Venter J.C."/>
        </authorList>
    </citation>
    <scope>NUCLEOTIDE SEQUENCE [GENOMIC DNA]</scope>
    <source>
        <strain>Bangladesh-1975</strain>
    </source>
</reference>
<feature type="chain" id="PRO_0000448103" description="DNA polymerase">
    <location>
        <begin position="1"/>
        <end position="1005"/>
    </location>
</feature>
<protein>
    <recommendedName>
        <fullName>DNA polymerase</fullName>
        <ecNumber>2.7.7.7</ecNumber>
    </recommendedName>
    <domain>
        <recommendedName>
            <fullName>3'-5' exodeoxyribonuclease</fullName>
            <shortName>3'-5' exonuclease</shortName>
            <ecNumber>3.1.11.-</ecNumber>
        </recommendedName>
    </domain>
</protein>
<name>DPOL_VARV</name>
<comment type="function">
    <text evidence="1">Catalyzes DNA synthesis. Acquires processivity by associating with a heterodimeric processivity factor comprised of the viral OPG148 and OPG116 proteins, thereby forming the DNA polymerase holoenzyme. Displays 3'- to 5' exonuclease activity. Might participate in viral DNA recombination. Does not perform OPG116/D4synthesis across an abasic site.</text>
</comment>
<comment type="catalytic activity">
    <reaction evidence="1">
        <text>DNA(n) + a 2'-deoxyribonucleoside 5'-triphosphate = DNA(n+1) + diphosphate</text>
        <dbReference type="Rhea" id="RHEA:22508"/>
        <dbReference type="Rhea" id="RHEA-COMP:17339"/>
        <dbReference type="Rhea" id="RHEA-COMP:17340"/>
        <dbReference type="ChEBI" id="CHEBI:33019"/>
        <dbReference type="ChEBI" id="CHEBI:61560"/>
        <dbReference type="ChEBI" id="CHEBI:173112"/>
        <dbReference type="EC" id="2.7.7.7"/>
    </reaction>
</comment>
<comment type="subunit">
    <text evidence="1">Interacts with OPG148. Component of the Uracil-DNA glycosylase(UDG)-OPG148-polymerase complex; OPG148 and OPG116/UDG form a heterodimeric processivity factor that associates with OPG071 to form the processive polymerase holoenzyme.</text>
</comment>
<comment type="induction">
    <text evidence="1">Expressed in the early phase of the viral replicative cycle.</text>
</comment>
<comment type="similarity">
    <text evidence="2">Belongs to the DNA polymerase type-B family.</text>
</comment>
<sequence>MDVRCINWFESHGENRFLYLKSRCRNGETVFIRFPHYFYYVVTDEIYQSLAPPPFNARPMGKMRTIDIDETISYNLDIKDRKCSVADMWLIEEPKKRNIQNATMDEFLNISWFYISNGISPDGCYSLDDQYLTKINNGCYHCGDPRNCFAKEIPRFDIPRSYLFLDIECHFDKKFPSVFINPISHTSYCYIDLSGKRLLFTLINEEMLTEQEIQEAVDRGCLRIQSLMEMDYERELVLCSEIVLLQIAKQLLELTFDYIVTFNGHNFDLRYITNRLELLTGEKIIFRSPDKKEAVHLCIYERNQSSHKGVGGMANTTFHVNNNNGTIFFDLYSFIQKSEKLDSYKLDSISKNAFSCMGKVLNRGVREMTFIGDDTTDAKGKAAVFAKVLTTGNYVTVDDIICKVIHKDIWENGFKVVLSCPTLTNDTYKLSFGKDDVDLAQMYKDYNLNIALDMARYCIHDACLCQYLWEYYGVETKTDAGASTYVLPQSMVFEYKASTVIKGPLLKLLLETKTILVRSETKQKFPYEGGKVFAPKQKMFSNNVLIFDYNSLYPNVCIFGNLSPETLVGVVVSSNRLEEEINNQLLLQKYPPPRYITVHCEPRLPNLISEIAIFDRSIEGTIPRLLRTFLAERARYKKMLKQATSSTEKAIYDSMQYTYKIIANSVYGLMGFRNSALYSYASAKSCTSIGRRMILYLESVLNGAELSNGMLRFANPLSNPFYMDDRDINPIVKTSLPIDYRFRFRSVYGDTDSVFTEIDSQDVDKSIEIAKELERLINSRVLFNNFKIEFEAVYKNLIMQSKKKYTTMKYSASSNSKSVPERINKGTSETRRDVSKFHKNMIKIYKTRLSEMLSEGRMNSNQVCIDILRSLETDLRSEFDSRSSPLELFMLSRMHHLNYKSADNPNMYLVTEYNKNNPETIELGERYYFAYICPANVPWTKKLVNIKTYETIIDRSFKLGSDQRIFYEVYFKRLTSEIVNLLDNKVLCISFFERMFGSRPTFYEA</sequence>